<organism>
    <name type="scientific">Rattus norvegicus</name>
    <name type="common">Rat</name>
    <dbReference type="NCBI Taxonomy" id="10116"/>
    <lineage>
        <taxon>Eukaryota</taxon>
        <taxon>Metazoa</taxon>
        <taxon>Chordata</taxon>
        <taxon>Craniata</taxon>
        <taxon>Vertebrata</taxon>
        <taxon>Euteleostomi</taxon>
        <taxon>Mammalia</taxon>
        <taxon>Eutheria</taxon>
        <taxon>Euarchontoglires</taxon>
        <taxon>Glires</taxon>
        <taxon>Rodentia</taxon>
        <taxon>Myomorpha</taxon>
        <taxon>Muroidea</taxon>
        <taxon>Muridae</taxon>
        <taxon>Murinae</taxon>
        <taxon>Rattus</taxon>
    </lineage>
</organism>
<name>FA32A_RAT</name>
<proteinExistence type="inferred from homology"/>
<keyword id="KW-0053">Apoptosis</keyword>
<keyword id="KW-0131">Cell cycle</keyword>
<keyword id="KW-0539">Nucleus</keyword>
<keyword id="KW-1185">Reference proteome</keyword>
<accession>B2RYG1</accession>
<reference key="1">
    <citation type="journal article" date="2004" name="Genome Res.">
        <title>The status, quality, and expansion of the NIH full-length cDNA project: the Mammalian Gene Collection (MGC).</title>
        <authorList>
            <consortium name="The MGC Project Team"/>
        </authorList>
    </citation>
    <scope>NUCLEOTIDE SEQUENCE [LARGE SCALE MRNA]</scope>
    <source>
        <tissue>Prostate</tissue>
    </source>
</reference>
<protein>
    <recommendedName>
        <fullName>Protein FAM32A</fullName>
    </recommendedName>
    <alternativeName>
        <fullName>Ovarian tumor associated gene 12</fullName>
        <shortName>OTAG-12</shortName>
    </alternativeName>
</protein>
<feature type="chain" id="PRO_0000417671" description="Protein FAM32A">
    <location>
        <begin position="1"/>
        <end position="112"/>
    </location>
</feature>
<feature type="region of interest" description="Disordered" evidence="2">
    <location>
        <begin position="23"/>
        <end position="56"/>
    </location>
</feature>
<feature type="compositionally biased region" description="Basic and acidic residues" evidence="2">
    <location>
        <begin position="45"/>
        <end position="56"/>
    </location>
</feature>
<dbReference type="EMBL" id="BC166765">
    <property type="protein sequence ID" value="AAI66765.1"/>
    <property type="molecule type" value="mRNA"/>
</dbReference>
<dbReference type="RefSeq" id="NP_001121550.1">
    <property type="nucleotide sequence ID" value="NM_001128078.3"/>
</dbReference>
<dbReference type="SMR" id="B2RYG1"/>
<dbReference type="FunCoup" id="B2RYG1">
    <property type="interactions" value="1561"/>
</dbReference>
<dbReference type="STRING" id="10116.ENSRNOP00000019556"/>
<dbReference type="PhosphoSitePlus" id="B2RYG1"/>
<dbReference type="PaxDb" id="10116-ENSRNOP00000019556"/>
<dbReference type="PeptideAtlas" id="B2RYG1"/>
<dbReference type="GeneID" id="498600"/>
<dbReference type="KEGG" id="rno:498600"/>
<dbReference type="UCSC" id="RGD:1561287">
    <property type="organism name" value="rat"/>
</dbReference>
<dbReference type="AGR" id="RGD:1561287"/>
<dbReference type="CTD" id="26017"/>
<dbReference type="RGD" id="1561287">
    <property type="gene designation" value="Fam32a"/>
</dbReference>
<dbReference type="eggNOG" id="KOG3410">
    <property type="taxonomic scope" value="Eukaryota"/>
</dbReference>
<dbReference type="HOGENOM" id="CLU_098435_3_0_1"/>
<dbReference type="InParanoid" id="B2RYG1"/>
<dbReference type="OrthoDB" id="60858at9989"/>
<dbReference type="PhylomeDB" id="B2RYG1"/>
<dbReference type="TreeFam" id="TF314020"/>
<dbReference type="Reactome" id="R-RNO-72163">
    <property type="pathway name" value="mRNA Splicing - Major Pathway"/>
</dbReference>
<dbReference type="PRO" id="PR:B2RYG1"/>
<dbReference type="Proteomes" id="UP000002494">
    <property type="component" value="Chromosome 16"/>
</dbReference>
<dbReference type="Bgee" id="ENSRNOG00000039528">
    <property type="expression patterns" value="Expressed in pancreas and 20 other cell types or tissues"/>
</dbReference>
<dbReference type="GO" id="GO:0005730">
    <property type="term" value="C:nucleolus"/>
    <property type="evidence" value="ECO:0000318"/>
    <property type="project" value="GO_Central"/>
</dbReference>
<dbReference type="GO" id="GO:0006915">
    <property type="term" value="P:apoptotic process"/>
    <property type="evidence" value="ECO:0007669"/>
    <property type="project" value="UniProtKB-KW"/>
</dbReference>
<dbReference type="InterPro" id="IPR013865">
    <property type="entry name" value="FAM32A"/>
</dbReference>
<dbReference type="PANTHER" id="PTHR13282">
    <property type="entry name" value="PROTEIN FAM32A"/>
    <property type="match status" value="1"/>
</dbReference>
<dbReference type="PANTHER" id="PTHR13282:SF6">
    <property type="entry name" value="PROTEIN FAM32A"/>
    <property type="match status" value="1"/>
</dbReference>
<dbReference type="Pfam" id="PF08555">
    <property type="entry name" value="FAM32A"/>
    <property type="match status" value="1"/>
</dbReference>
<evidence type="ECO:0000250" key="1"/>
<evidence type="ECO:0000256" key="2">
    <source>
        <dbReference type="SAM" id="MobiDB-lite"/>
    </source>
</evidence>
<evidence type="ECO:0000305" key="3"/>
<comment type="function">
    <text evidence="1">May induce G2 arrest and apoptosis. May also increase cell sensitivity to apoptotic stimuli.</text>
</comment>
<comment type="subcellular location">
    <subcellularLocation>
        <location evidence="1">Nucleus</location>
    </subcellularLocation>
</comment>
<comment type="similarity">
    <text evidence="3">Belongs to the FAM32 family.</text>
</comment>
<sequence length="112" mass="13242">MEAYEQVQKGPLKLKGVAELGVTKRKKKKKDKDKAKMLEAMGTSKKNEEEKRRCLDKRTPAQAAFEKMQEKRQMERILKKASKTHKQRVEDFNRHLDTLTEHYDIPKVSWTK</sequence>
<gene>
    <name type="primary">Fam32a</name>
    <name type="synonym">Otag12</name>
</gene>